<feature type="chain" id="PRO_1000082821" description="Ribosomal RNA large subunit methyltransferase H">
    <location>
        <begin position="1"/>
        <end position="159"/>
    </location>
</feature>
<feature type="binding site" evidence="1">
    <location>
        <position position="76"/>
    </location>
    <ligand>
        <name>S-adenosyl-L-methionine</name>
        <dbReference type="ChEBI" id="CHEBI:59789"/>
    </ligand>
</feature>
<feature type="binding site" evidence="1">
    <location>
        <position position="108"/>
    </location>
    <ligand>
        <name>S-adenosyl-L-methionine</name>
        <dbReference type="ChEBI" id="CHEBI:59789"/>
    </ligand>
</feature>
<feature type="binding site" evidence="1">
    <location>
        <begin position="127"/>
        <end position="132"/>
    </location>
    <ligand>
        <name>S-adenosyl-L-methionine</name>
        <dbReference type="ChEBI" id="CHEBI:59789"/>
    </ligand>
</feature>
<keyword id="KW-0963">Cytoplasm</keyword>
<keyword id="KW-0489">Methyltransferase</keyword>
<keyword id="KW-1185">Reference proteome</keyword>
<keyword id="KW-0698">rRNA processing</keyword>
<keyword id="KW-0949">S-adenosyl-L-methionine</keyword>
<keyword id="KW-0808">Transferase</keyword>
<proteinExistence type="inferred from homology"/>
<gene>
    <name evidence="1" type="primary">rlmH</name>
    <name type="ordered locus">SGO_2149</name>
</gene>
<reference key="1">
    <citation type="journal article" date="2007" name="J. Bacteriol.">
        <title>Genome-wide transcriptional changes in Streptococcus gordonii in response to competence signaling peptide.</title>
        <authorList>
            <person name="Vickerman M.M."/>
            <person name="Iobst S."/>
            <person name="Jesionowski A.M."/>
            <person name="Gill S.R."/>
        </authorList>
    </citation>
    <scope>NUCLEOTIDE SEQUENCE [LARGE SCALE GENOMIC DNA]</scope>
    <source>
        <strain>Challis / ATCC 35105 / BCRC 15272 / CH1 / DL1 / V288</strain>
    </source>
</reference>
<comment type="function">
    <text evidence="1">Specifically methylates the pseudouridine at position 1915 (m3Psi1915) in 23S rRNA.</text>
</comment>
<comment type="catalytic activity">
    <reaction evidence="1">
        <text>pseudouridine(1915) in 23S rRNA + S-adenosyl-L-methionine = N(3)-methylpseudouridine(1915) in 23S rRNA + S-adenosyl-L-homocysteine + H(+)</text>
        <dbReference type="Rhea" id="RHEA:42752"/>
        <dbReference type="Rhea" id="RHEA-COMP:10221"/>
        <dbReference type="Rhea" id="RHEA-COMP:10222"/>
        <dbReference type="ChEBI" id="CHEBI:15378"/>
        <dbReference type="ChEBI" id="CHEBI:57856"/>
        <dbReference type="ChEBI" id="CHEBI:59789"/>
        <dbReference type="ChEBI" id="CHEBI:65314"/>
        <dbReference type="ChEBI" id="CHEBI:74486"/>
        <dbReference type="EC" id="2.1.1.177"/>
    </reaction>
</comment>
<comment type="subunit">
    <text evidence="1">Homodimer.</text>
</comment>
<comment type="subcellular location">
    <subcellularLocation>
        <location evidence="1">Cytoplasm</location>
    </subcellularLocation>
</comment>
<comment type="similarity">
    <text evidence="1">Belongs to the RNA methyltransferase RlmH family.</text>
</comment>
<protein>
    <recommendedName>
        <fullName evidence="1">Ribosomal RNA large subunit methyltransferase H</fullName>
        <ecNumber evidence="1">2.1.1.177</ecNumber>
    </recommendedName>
    <alternativeName>
        <fullName evidence="1">23S rRNA (pseudouridine1915-N3)-methyltransferase</fullName>
    </alternativeName>
    <alternativeName>
        <fullName evidence="1">23S rRNA m3Psi1915 methyltransferase</fullName>
    </alternativeName>
    <alternativeName>
        <fullName evidence="1">rRNA (pseudouridine-N3-)-methyltransferase RlmH</fullName>
    </alternativeName>
</protein>
<sequence length="159" mass="18088">MKIKLVTVGKLKEKYLKEGIAEYSKRLSRFTKVEIIELADEKTPDKASPLENQQILSKEGERILSKVLDREFVIVLAIEGQQFPSEKFSKVIEDASVRGFSDITFIIGGSLGLSAKVKERANLLMSFGQLTLPHQLMRLVLMEQIYRAFMIQQGSPYHK</sequence>
<name>RLMH_STRGC</name>
<dbReference type="EC" id="2.1.1.177" evidence="1"/>
<dbReference type="EMBL" id="CP000725">
    <property type="protein sequence ID" value="ABV11147.1"/>
    <property type="molecule type" value="Genomic_DNA"/>
</dbReference>
<dbReference type="RefSeq" id="WP_012131080.1">
    <property type="nucleotide sequence ID" value="NC_009785.1"/>
</dbReference>
<dbReference type="SMR" id="A8B011"/>
<dbReference type="STRING" id="467705.SGO_2149"/>
<dbReference type="KEGG" id="sgo:SGO_2149"/>
<dbReference type="eggNOG" id="COG1576">
    <property type="taxonomic scope" value="Bacteria"/>
</dbReference>
<dbReference type="HOGENOM" id="CLU_100552_0_0_9"/>
<dbReference type="Proteomes" id="UP000001131">
    <property type="component" value="Chromosome"/>
</dbReference>
<dbReference type="GO" id="GO:0005737">
    <property type="term" value="C:cytoplasm"/>
    <property type="evidence" value="ECO:0007669"/>
    <property type="project" value="UniProtKB-SubCell"/>
</dbReference>
<dbReference type="GO" id="GO:0070038">
    <property type="term" value="F:rRNA (pseudouridine-N3-)-methyltransferase activity"/>
    <property type="evidence" value="ECO:0007669"/>
    <property type="project" value="UniProtKB-UniRule"/>
</dbReference>
<dbReference type="CDD" id="cd18081">
    <property type="entry name" value="RlmH-like"/>
    <property type="match status" value="1"/>
</dbReference>
<dbReference type="Gene3D" id="3.40.1280.10">
    <property type="match status" value="1"/>
</dbReference>
<dbReference type="HAMAP" id="MF_00658">
    <property type="entry name" value="23SrRNA_methyltr_H"/>
    <property type="match status" value="1"/>
</dbReference>
<dbReference type="InterPro" id="IPR029028">
    <property type="entry name" value="Alpha/beta_knot_MTases"/>
</dbReference>
<dbReference type="InterPro" id="IPR003742">
    <property type="entry name" value="RlmH-like"/>
</dbReference>
<dbReference type="InterPro" id="IPR029026">
    <property type="entry name" value="tRNA_m1G_MTases_N"/>
</dbReference>
<dbReference type="NCBIfam" id="NF000985">
    <property type="entry name" value="PRK00103.1-3"/>
    <property type="match status" value="1"/>
</dbReference>
<dbReference type="NCBIfam" id="TIGR00246">
    <property type="entry name" value="tRNA_RlmH_YbeA"/>
    <property type="match status" value="1"/>
</dbReference>
<dbReference type="PANTHER" id="PTHR33603">
    <property type="entry name" value="METHYLTRANSFERASE"/>
    <property type="match status" value="1"/>
</dbReference>
<dbReference type="PANTHER" id="PTHR33603:SF1">
    <property type="entry name" value="RIBOSOMAL RNA LARGE SUBUNIT METHYLTRANSFERASE H"/>
    <property type="match status" value="1"/>
</dbReference>
<dbReference type="Pfam" id="PF02590">
    <property type="entry name" value="SPOUT_MTase"/>
    <property type="match status" value="1"/>
</dbReference>
<dbReference type="PIRSF" id="PIRSF004505">
    <property type="entry name" value="MT_bac"/>
    <property type="match status" value="1"/>
</dbReference>
<dbReference type="SUPFAM" id="SSF75217">
    <property type="entry name" value="alpha/beta knot"/>
    <property type="match status" value="1"/>
</dbReference>
<accession>A8B011</accession>
<organism>
    <name type="scientific">Streptococcus gordonii (strain Challis / ATCC 35105 / BCRC 15272 / CH1 / DL1 / V288)</name>
    <dbReference type="NCBI Taxonomy" id="467705"/>
    <lineage>
        <taxon>Bacteria</taxon>
        <taxon>Bacillati</taxon>
        <taxon>Bacillota</taxon>
        <taxon>Bacilli</taxon>
        <taxon>Lactobacillales</taxon>
        <taxon>Streptococcaceae</taxon>
        <taxon>Streptococcus</taxon>
    </lineage>
</organism>
<evidence type="ECO:0000255" key="1">
    <source>
        <dbReference type="HAMAP-Rule" id="MF_00658"/>
    </source>
</evidence>